<proteinExistence type="inferred from homology"/>
<organism>
    <name type="scientific">Mycolicibacterium paratuberculosis (strain ATCC BAA-968 / K-10)</name>
    <name type="common">Mycobacterium paratuberculosis</name>
    <dbReference type="NCBI Taxonomy" id="262316"/>
    <lineage>
        <taxon>Bacteria</taxon>
        <taxon>Bacillati</taxon>
        <taxon>Actinomycetota</taxon>
        <taxon>Actinomycetes</taxon>
        <taxon>Mycobacteriales</taxon>
        <taxon>Mycobacteriaceae</taxon>
        <taxon>Mycobacterium</taxon>
        <taxon>Mycobacterium avium complex (MAC)</taxon>
    </lineage>
</organism>
<gene>
    <name evidence="1" type="primary">gatA</name>
    <name type="ordered locus">MAP_3045c</name>
</gene>
<name>GATA_MYCPA</name>
<sequence length="493" mass="51261">MNEIIRSDAATLAARIAAKELSSVEVTQACLDQIAATDERYHAFLHVAADEALGAAAVVDEAVAAGERLPSPLAGVPLALKDVFTTVDMPTTCGSKILQGWRSPYDATVTTKLRAAGIPILGKTNMDEFAMGSSTENSAYGPTRNPWNVERVPGGSGGGSAAALAAFQAPLAIGSDTGGSIRQPAALTATVGVKPTYGTVSRYGLVACASSLDQGGPCARTVLDTALLHQVIAGHDIRDSTSVDAPVPDVVGAARAGTAGDLKGVRVGVVKQLRGEGYQPGVLASFEAAVEQLTALGAEVSEVDCPHFEYALAAYYLILPSEVSSNLARFDAMRYGLRIGDDGSHSAEEVMALTRAAGFGPEVKRRIMIGTYALSAGYYDAYYNQAQKVRTLIARDLDAAYESVDVVVSPATPTTAFGLGEKVDDPLAMYLFDLCTLPLNLAGNCGMSVPSGLSPDDDLPVGLQIMAPALADDRLYRVGAAYEAARGPLRSAI</sequence>
<feature type="chain" id="PRO_0000241119" description="Glutamyl-tRNA(Gln) amidotransferase subunit A">
    <location>
        <begin position="1"/>
        <end position="493"/>
    </location>
</feature>
<feature type="active site" description="Charge relay system" evidence="1">
    <location>
        <position position="81"/>
    </location>
</feature>
<feature type="active site" description="Charge relay system" evidence="1">
    <location>
        <position position="156"/>
    </location>
</feature>
<feature type="active site" description="Acyl-ester intermediate" evidence="1">
    <location>
        <position position="180"/>
    </location>
</feature>
<comment type="function">
    <text evidence="1">Allows the formation of correctly charged Gln-tRNA(Gln) through the transamidation of misacylated Glu-tRNA(Gln) in organisms which lack glutaminyl-tRNA synthetase. The reaction takes place in the presence of glutamine and ATP through an activated gamma-phospho-Glu-tRNA(Gln).</text>
</comment>
<comment type="catalytic activity">
    <reaction evidence="1">
        <text>L-glutamyl-tRNA(Gln) + L-glutamine + ATP + H2O = L-glutaminyl-tRNA(Gln) + L-glutamate + ADP + phosphate + H(+)</text>
        <dbReference type="Rhea" id="RHEA:17521"/>
        <dbReference type="Rhea" id="RHEA-COMP:9681"/>
        <dbReference type="Rhea" id="RHEA-COMP:9684"/>
        <dbReference type="ChEBI" id="CHEBI:15377"/>
        <dbReference type="ChEBI" id="CHEBI:15378"/>
        <dbReference type="ChEBI" id="CHEBI:29985"/>
        <dbReference type="ChEBI" id="CHEBI:30616"/>
        <dbReference type="ChEBI" id="CHEBI:43474"/>
        <dbReference type="ChEBI" id="CHEBI:58359"/>
        <dbReference type="ChEBI" id="CHEBI:78520"/>
        <dbReference type="ChEBI" id="CHEBI:78521"/>
        <dbReference type="ChEBI" id="CHEBI:456216"/>
        <dbReference type="EC" id="6.3.5.7"/>
    </reaction>
</comment>
<comment type="subunit">
    <text evidence="1">Heterotrimer of A, B and C subunits.</text>
</comment>
<comment type="similarity">
    <text evidence="1">Belongs to the amidase family. GatA subfamily.</text>
</comment>
<reference key="1">
    <citation type="journal article" date="2005" name="Proc. Natl. Acad. Sci. U.S.A.">
        <title>The complete genome sequence of Mycobacterium avium subspecies paratuberculosis.</title>
        <authorList>
            <person name="Li L."/>
            <person name="Bannantine J.P."/>
            <person name="Zhang Q."/>
            <person name="Amonsin A."/>
            <person name="May B.J."/>
            <person name="Alt D."/>
            <person name="Banerji N."/>
            <person name="Kanjilal S."/>
            <person name="Kapur V."/>
        </authorList>
    </citation>
    <scope>NUCLEOTIDE SEQUENCE [LARGE SCALE GENOMIC DNA]</scope>
    <source>
        <strain>ATCC BAA-968 / K-10</strain>
    </source>
</reference>
<dbReference type="EC" id="6.3.5.7" evidence="1"/>
<dbReference type="EMBL" id="AE016958">
    <property type="protein sequence ID" value="AAS05593.1"/>
    <property type="molecule type" value="Genomic_DNA"/>
</dbReference>
<dbReference type="RefSeq" id="WP_003878747.1">
    <property type="nucleotide sequence ID" value="NZ_CP106873.1"/>
</dbReference>
<dbReference type="SMR" id="Q73VG9"/>
<dbReference type="STRING" id="262316.MAP_3045c"/>
<dbReference type="KEGG" id="mpa:MAP_3045c"/>
<dbReference type="PATRIC" id="fig|262316.17.peg.3225"/>
<dbReference type="eggNOG" id="COG0154">
    <property type="taxonomic scope" value="Bacteria"/>
</dbReference>
<dbReference type="HOGENOM" id="CLU_009600_0_3_11"/>
<dbReference type="Proteomes" id="UP000000580">
    <property type="component" value="Chromosome"/>
</dbReference>
<dbReference type="GO" id="GO:0030956">
    <property type="term" value="C:glutamyl-tRNA(Gln) amidotransferase complex"/>
    <property type="evidence" value="ECO:0007669"/>
    <property type="project" value="InterPro"/>
</dbReference>
<dbReference type="GO" id="GO:0005524">
    <property type="term" value="F:ATP binding"/>
    <property type="evidence" value="ECO:0007669"/>
    <property type="project" value="UniProtKB-KW"/>
</dbReference>
<dbReference type="GO" id="GO:0050567">
    <property type="term" value="F:glutaminyl-tRNA synthase (glutamine-hydrolyzing) activity"/>
    <property type="evidence" value="ECO:0007669"/>
    <property type="project" value="UniProtKB-UniRule"/>
</dbReference>
<dbReference type="GO" id="GO:0006412">
    <property type="term" value="P:translation"/>
    <property type="evidence" value="ECO:0007669"/>
    <property type="project" value="UniProtKB-UniRule"/>
</dbReference>
<dbReference type="Gene3D" id="3.90.1300.10">
    <property type="entry name" value="Amidase signature (AS) domain"/>
    <property type="match status" value="1"/>
</dbReference>
<dbReference type="HAMAP" id="MF_00120">
    <property type="entry name" value="GatA"/>
    <property type="match status" value="1"/>
</dbReference>
<dbReference type="InterPro" id="IPR000120">
    <property type="entry name" value="Amidase"/>
</dbReference>
<dbReference type="InterPro" id="IPR020556">
    <property type="entry name" value="Amidase_CS"/>
</dbReference>
<dbReference type="InterPro" id="IPR023631">
    <property type="entry name" value="Amidase_dom"/>
</dbReference>
<dbReference type="InterPro" id="IPR036928">
    <property type="entry name" value="AS_sf"/>
</dbReference>
<dbReference type="InterPro" id="IPR004412">
    <property type="entry name" value="GatA"/>
</dbReference>
<dbReference type="NCBIfam" id="TIGR00132">
    <property type="entry name" value="gatA"/>
    <property type="match status" value="1"/>
</dbReference>
<dbReference type="PANTHER" id="PTHR11895:SF151">
    <property type="entry name" value="GLUTAMYL-TRNA(GLN) AMIDOTRANSFERASE SUBUNIT A"/>
    <property type="match status" value="1"/>
</dbReference>
<dbReference type="PANTHER" id="PTHR11895">
    <property type="entry name" value="TRANSAMIDASE"/>
    <property type="match status" value="1"/>
</dbReference>
<dbReference type="Pfam" id="PF01425">
    <property type="entry name" value="Amidase"/>
    <property type="match status" value="1"/>
</dbReference>
<dbReference type="SUPFAM" id="SSF75304">
    <property type="entry name" value="Amidase signature (AS) enzymes"/>
    <property type="match status" value="1"/>
</dbReference>
<dbReference type="PROSITE" id="PS00571">
    <property type="entry name" value="AMIDASES"/>
    <property type="match status" value="1"/>
</dbReference>
<keyword id="KW-0067">ATP-binding</keyword>
<keyword id="KW-0436">Ligase</keyword>
<keyword id="KW-0547">Nucleotide-binding</keyword>
<keyword id="KW-0648">Protein biosynthesis</keyword>
<keyword id="KW-1185">Reference proteome</keyword>
<evidence type="ECO:0000255" key="1">
    <source>
        <dbReference type="HAMAP-Rule" id="MF_00120"/>
    </source>
</evidence>
<protein>
    <recommendedName>
        <fullName evidence="1">Glutamyl-tRNA(Gln) amidotransferase subunit A</fullName>
        <shortName evidence="1">Glu-ADT subunit A</shortName>
        <ecNumber evidence="1">6.3.5.7</ecNumber>
    </recommendedName>
</protein>
<accession>Q73VG9</accession>